<protein>
    <recommendedName>
        <fullName>RTX-III toxin determinant D</fullName>
    </recommendedName>
    <alternativeName>
        <fullName>APX-IIID</fullName>
    </alternativeName>
    <alternativeName>
        <fullName>Cytolysin IIID</fullName>
        <shortName>CLY-IIID</shortName>
    </alternativeName>
    <alternativeName>
        <fullName>Toxin RTX-III secretion protein D</fullName>
    </alternativeName>
</protein>
<feature type="chain" id="PRO_0000201892" description="RTX-III toxin determinant D">
    <location>
        <begin position="1"/>
        <end position="477"/>
    </location>
</feature>
<feature type="topological domain" description="Cytoplasmic" evidence="1">
    <location>
        <begin position="1"/>
        <end position="59"/>
    </location>
</feature>
<feature type="transmembrane region" description="Helical" evidence="1">
    <location>
        <begin position="60"/>
        <end position="77"/>
    </location>
</feature>
<feature type="topological domain" description="Periplasmic" evidence="1">
    <location>
        <begin position="78"/>
        <end position="477"/>
    </location>
</feature>
<feature type="sequence variant" description="In strain: 405 / Serotype 8.">
    <original>R</original>
    <variation>A</variation>
    <location>
        <position position="44"/>
    </location>
</feature>
<feature type="sequence variant" description="In strain: 405 / Serotype 8.">
    <original>C</original>
    <variation>A</variation>
    <location>
        <position position="132"/>
    </location>
</feature>
<feature type="sequence variant" description="In strain: 405 / Serotype 8.">
    <original>GA</original>
    <variation>NT</variation>
    <location>
        <begin position="185"/>
        <end position="186"/>
    </location>
</feature>
<feature type="sequence variant" description="In strain: 405 / Serotype 8.">
    <original>V</original>
    <variation>I</variation>
    <location>
        <position position="376"/>
    </location>
</feature>
<comment type="function">
    <text>Involved in the transport of the toxin RTX-III.</text>
</comment>
<comment type="subcellular location">
    <subcellularLocation>
        <location evidence="2">Cell inner membrane</location>
        <topology evidence="2">Single-pass membrane protein</topology>
    </subcellularLocation>
</comment>
<comment type="miscellaneous">
    <text>The sequence shown is that of serotype 2.</text>
</comment>
<comment type="similarity">
    <text evidence="2">Belongs to the membrane fusion protein (MFP) (TC 8.A.1) family.</text>
</comment>
<keyword id="KW-0997">Cell inner membrane</keyword>
<keyword id="KW-1003">Cell membrane</keyword>
<keyword id="KW-0204">Cytolysis</keyword>
<keyword id="KW-0472">Membrane</keyword>
<keyword id="KW-0812">Transmembrane</keyword>
<keyword id="KW-1133">Transmembrane helix</keyword>
<keyword id="KW-0813">Transport</keyword>
<proteinExistence type="inferred from homology"/>
<accession>Q08633</accession>
<name>RTX3D_ACTPL</name>
<gene>
    <name type="primary">apxIIID</name>
    <name type="synonym">clyIIID</name>
    <name type="synonym">rtxD</name>
</gene>
<dbReference type="EMBL" id="L12145">
    <property type="protein sequence ID" value="AAA21926.1"/>
    <property type="molecule type" value="Genomic_DNA"/>
</dbReference>
<dbReference type="EMBL" id="X80055">
    <property type="protein sequence ID" value="CAA56360.1"/>
    <property type="molecule type" value="Genomic_DNA"/>
</dbReference>
<dbReference type="PIR" id="S48045">
    <property type="entry name" value="S48045"/>
</dbReference>
<dbReference type="SMR" id="Q08633"/>
<dbReference type="GO" id="GO:0005886">
    <property type="term" value="C:plasma membrane"/>
    <property type="evidence" value="ECO:0007669"/>
    <property type="project" value="UniProtKB-SubCell"/>
</dbReference>
<dbReference type="GO" id="GO:0031640">
    <property type="term" value="P:killing of cells of another organism"/>
    <property type="evidence" value="ECO:0007669"/>
    <property type="project" value="UniProtKB-KW"/>
</dbReference>
<dbReference type="GO" id="GO:0009306">
    <property type="term" value="P:protein secretion"/>
    <property type="evidence" value="ECO:0007669"/>
    <property type="project" value="InterPro"/>
</dbReference>
<dbReference type="Gene3D" id="2.40.30.170">
    <property type="match status" value="1"/>
</dbReference>
<dbReference type="InterPro" id="IPR050739">
    <property type="entry name" value="MFP"/>
</dbReference>
<dbReference type="InterPro" id="IPR006144">
    <property type="entry name" value="Secretion_HlyD_CS"/>
</dbReference>
<dbReference type="InterPro" id="IPR010129">
    <property type="entry name" value="T1SS_HlyD"/>
</dbReference>
<dbReference type="NCBIfam" id="TIGR01843">
    <property type="entry name" value="type_I_hlyD"/>
    <property type="match status" value="1"/>
</dbReference>
<dbReference type="PANTHER" id="PTHR30386:SF27">
    <property type="entry name" value="MEMBRANE FUSION PROTEIN (MFP) FAMILY PROTEIN"/>
    <property type="match status" value="1"/>
</dbReference>
<dbReference type="PANTHER" id="PTHR30386">
    <property type="entry name" value="MEMBRANE FUSION SUBUNIT OF EMRAB-TOLC MULTIDRUG EFFLUX PUMP"/>
    <property type="match status" value="1"/>
</dbReference>
<dbReference type="Pfam" id="PF13437">
    <property type="entry name" value="HlyD_3"/>
    <property type="match status" value="1"/>
</dbReference>
<dbReference type="PRINTS" id="PR01490">
    <property type="entry name" value="RTXTOXIND"/>
</dbReference>
<dbReference type="PROSITE" id="PS00543">
    <property type="entry name" value="HLYD_FAMILY"/>
    <property type="match status" value="1"/>
</dbReference>
<organism>
    <name type="scientific">Actinobacillus pleuropneumoniae</name>
    <name type="common">Haemophilus pleuropneumoniae</name>
    <dbReference type="NCBI Taxonomy" id="715"/>
    <lineage>
        <taxon>Bacteria</taxon>
        <taxon>Pseudomonadati</taxon>
        <taxon>Pseudomonadota</taxon>
        <taxon>Gammaproteobacteria</taxon>
        <taxon>Pasteurellales</taxon>
        <taxon>Pasteurellaceae</taxon>
        <taxon>Actinobacillus</taxon>
    </lineage>
</organism>
<sequence length="477" mass="54780">MKLWILGLGEFFQRYRNIWREIWKIRKQLDTPARQKDENEFLPRHLELIETPISKKPRLIAYLIMLFLFLAIVISIISKVEIVASATGKLVFSGHSKEIKPIENALVKDIFVKDGQFVEKGQLLLNLTALGCDADKQKTKVSLGLERLDGYRYKSLLYSIEHNRLPLLDFNQADFDSVQEEDKTGARHLITEQFETWQKQKYQKELAYQRKQAEKQTVLANIRKYESASRIEKEKLSDLKKLYDVKSISKHELLAQENRYVEASNELSVYQSHLKEVESDLLKAQEDLKLVTQLFKSDILEKLQQNIQREKQLTLELEKNEQRQLASIIRAPVSGTVQQLKTHTKGGVVTTAETLMVIAPEDDVLEVSALIQNKDVGFVEIGQEAVIKVETFPYTRYGYLYGKVKTITLDAIEHPQLGLVFNSIIEINKKTLTDGDKEIQLGSGMSVIAEIKTGERSVISFLLSPLEESITESLRER</sequence>
<reference key="1">
    <citation type="journal article" date="1993" name="DNA Cell Biol.">
        <title>Molecular analysis of the Actinobacillus pleuropneumoniae RTX toxin-III gene cluster.</title>
        <authorList>
            <person name="Chang Y.-F."/>
            <person name="Shi J."/>
            <person name="Ma D.-P."/>
            <person name="Shin S.J."/>
            <person name="Lein D.H."/>
        </authorList>
    </citation>
    <scope>NUCLEOTIDE SEQUENCE [GENOMIC DNA]</scope>
    <source>
        <strain>Serotype 2</strain>
    </source>
</reference>
<reference key="2">
    <citation type="journal article" date="1994" name="Infect. Immun.">
        <title>Genetic map of the Actinobacillus pleuropneumoniae RTX-toxin (Apx) operons: characterization of the ApxIII operons.</title>
        <authorList>
            <person name="Jansen R."/>
            <person name="Briaire J."/>
            <person name="van Geel A.B.M."/>
            <person name="Kamp E.M."/>
            <person name="Gielkens A.L.J."/>
            <person name="Smits M.A."/>
        </authorList>
    </citation>
    <scope>NUCLEOTIDE SEQUENCE [GENOMIC DNA]</scope>
    <source>
        <strain>405 / Serotype 8</strain>
    </source>
</reference>
<evidence type="ECO:0000255" key="1"/>
<evidence type="ECO:0000305" key="2"/>